<feature type="chain" id="PRO_1000130153" description="tRNA (guanine-N(1)-)-methyltransferase">
    <location>
        <begin position="1"/>
        <end position="240"/>
    </location>
</feature>
<feature type="binding site" evidence="1">
    <location>
        <position position="110"/>
    </location>
    <ligand>
        <name>S-adenosyl-L-methionine</name>
        <dbReference type="ChEBI" id="CHEBI:59789"/>
    </ligand>
</feature>
<feature type="binding site" evidence="1">
    <location>
        <begin position="129"/>
        <end position="134"/>
    </location>
    <ligand>
        <name>S-adenosyl-L-methionine</name>
        <dbReference type="ChEBI" id="CHEBI:59789"/>
    </ligand>
</feature>
<reference key="1">
    <citation type="journal article" date="2007" name="PLoS ONE">
        <title>Analysis of the neurotoxin complex genes in Clostridium botulinum A1-A4 and B1 strains: BoNT/A3, /Ba4 and /B1 clusters are located within plasmids.</title>
        <authorList>
            <person name="Smith T.J."/>
            <person name="Hill K.K."/>
            <person name="Foley B.T."/>
            <person name="Detter J.C."/>
            <person name="Munk A.C."/>
            <person name="Bruce D.C."/>
            <person name="Doggett N.A."/>
            <person name="Smith L.A."/>
            <person name="Marks J.D."/>
            <person name="Xie G."/>
            <person name="Brettin T.S."/>
        </authorList>
    </citation>
    <scope>NUCLEOTIDE SEQUENCE [LARGE SCALE GENOMIC DNA]</scope>
    <source>
        <strain>Loch Maree / Type A3</strain>
    </source>
</reference>
<gene>
    <name evidence="1" type="primary">trmD</name>
    <name type="ordered locus">CLK_1822</name>
</gene>
<organism>
    <name type="scientific">Clostridium botulinum (strain Loch Maree / Type A3)</name>
    <dbReference type="NCBI Taxonomy" id="498214"/>
    <lineage>
        <taxon>Bacteria</taxon>
        <taxon>Bacillati</taxon>
        <taxon>Bacillota</taxon>
        <taxon>Clostridia</taxon>
        <taxon>Eubacteriales</taxon>
        <taxon>Clostridiaceae</taxon>
        <taxon>Clostridium</taxon>
    </lineage>
</organism>
<proteinExistence type="inferred from homology"/>
<sequence length="240" mass="27439">MRIDVLTLFPEMFSIFNHSIIGRAIENEFLKINTVNIRDYTINKHKKVDDYPYGGGAGMVMAAQPIVDSIKTVKKENKGKVIFLGPKGKTFNQDLAKELAREEELIFLCGHYEGIDERAYEYIDMEISLGDFVLTGGEMACIPIVDSICRLLDGVLGSSESYEDESFYNGLLEYPQYTRPAIYEGKAVPKVLLSGHHENIKKWRKAKSLIITNKVRPDLFKKYKLTEEDKKILKDFNKKL</sequence>
<name>TRMD_CLOBM</name>
<protein>
    <recommendedName>
        <fullName evidence="1">tRNA (guanine-N(1)-)-methyltransferase</fullName>
        <ecNumber evidence="1">2.1.1.228</ecNumber>
    </recommendedName>
    <alternativeName>
        <fullName evidence="1">M1G-methyltransferase</fullName>
    </alternativeName>
    <alternativeName>
        <fullName evidence="1">tRNA [GM37] methyltransferase</fullName>
    </alternativeName>
</protein>
<evidence type="ECO:0000255" key="1">
    <source>
        <dbReference type="HAMAP-Rule" id="MF_00605"/>
    </source>
</evidence>
<dbReference type="EC" id="2.1.1.228" evidence="1"/>
<dbReference type="EMBL" id="CP000962">
    <property type="protein sequence ID" value="ACA55067.1"/>
    <property type="molecule type" value="Genomic_DNA"/>
</dbReference>
<dbReference type="RefSeq" id="WP_012343091.1">
    <property type="nucleotide sequence ID" value="NC_010520.1"/>
</dbReference>
<dbReference type="SMR" id="B1KWN5"/>
<dbReference type="KEGG" id="cbl:CLK_1822"/>
<dbReference type="HOGENOM" id="CLU_047363_0_1_9"/>
<dbReference type="GO" id="GO:0005829">
    <property type="term" value="C:cytosol"/>
    <property type="evidence" value="ECO:0007669"/>
    <property type="project" value="TreeGrafter"/>
</dbReference>
<dbReference type="GO" id="GO:0052906">
    <property type="term" value="F:tRNA (guanine(37)-N1)-methyltransferase activity"/>
    <property type="evidence" value="ECO:0007669"/>
    <property type="project" value="UniProtKB-UniRule"/>
</dbReference>
<dbReference type="GO" id="GO:0002939">
    <property type="term" value="P:tRNA N1-guanine methylation"/>
    <property type="evidence" value="ECO:0007669"/>
    <property type="project" value="TreeGrafter"/>
</dbReference>
<dbReference type="CDD" id="cd18080">
    <property type="entry name" value="TrmD-like"/>
    <property type="match status" value="1"/>
</dbReference>
<dbReference type="FunFam" id="1.10.1270.20:FF:000001">
    <property type="entry name" value="tRNA (guanine-N(1)-)-methyltransferase"/>
    <property type="match status" value="1"/>
</dbReference>
<dbReference type="FunFam" id="3.40.1280.10:FF:000001">
    <property type="entry name" value="tRNA (guanine-N(1)-)-methyltransferase"/>
    <property type="match status" value="1"/>
</dbReference>
<dbReference type="Gene3D" id="3.40.1280.10">
    <property type="match status" value="1"/>
</dbReference>
<dbReference type="Gene3D" id="1.10.1270.20">
    <property type="entry name" value="tRNA(m1g37)methyltransferase, domain 2"/>
    <property type="match status" value="1"/>
</dbReference>
<dbReference type="HAMAP" id="MF_00605">
    <property type="entry name" value="TrmD"/>
    <property type="match status" value="1"/>
</dbReference>
<dbReference type="InterPro" id="IPR029028">
    <property type="entry name" value="Alpha/beta_knot_MTases"/>
</dbReference>
<dbReference type="InterPro" id="IPR023148">
    <property type="entry name" value="tRNA_m1G_MeTrfase_C_sf"/>
</dbReference>
<dbReference type="InterPro" id="IPR002649">
    <property type="entry name" value="tRNA_m1G_MeTrfase_TrmD"/>
</dbReference>
<dbReference type="InterPro" id="IPR029026">
    <property type="entry name" value="tRNA_m1G_MTases_N"/>
</dbReference>
<dbReference type="InterPro" id="IPR016009">
    <property type="entry name" value="tRNA_MeTrfase_TRMD/TRM10"/>
</dbReference>
<dbReference type="NCBIfam" id="NF000648">
    <property type="entry name" value="PRK00026.1"/>
    <property type="match status" value="1"/>
</dbReference>
<dbReference type="NCBIfam" id="TIGR00088">
    <property type="entry name" value="trmD"/>
    <property type="match status" value="1"/>
</dbReference>
<dbReference type="PANTHER" id="PTHR46417">
    <property type="entry name" value="TRNA (GUANINE-N(1)-)-METHYLTRANSFERASE"/>
    <property type="match status" value="1"/>
</dbReference>
<dbReference type="PANTHER" id="PTHR46417:SF1">
    <property type="entry name" value="TRNA (GUANINE-N(1)-)-METHYLTRANSFERASE"/>
    <property type="match status" value="1"/>
</dbReference>
<dbReference type="Pfam" id="PF01746">
    <property type="entry name" value="tRNA_m1G_MT"/>
    <property type="match status" value="1"/>
</dbReference>
<dbReference type="PIRSF" id="PIRSF000386">
    <property type="entry name" value="tRNA_mtase"/>
    <property type="match status" value="1"/>
</dbReference>
<dbReference type="SUPFAM" id="SSF75217">
    <property type="entry name" value="alpha/beta knot"/>
    <property type="match status" value="1"/>
</dbReference>
<keyword id="KW-0963">Cytoplasm</keyword>
<keyword id="KW-0489">Methyltransferase</keyword>
<keyword id="KW-0949">S-adenosyl-L-methionine</keyword>
<keyword id="KW-0808">Transferase</keyword>
<keyword id="KW-0819">tRNA processing</keyword>
<accession>B1KWN5</accession>
<comment type="function">
    <text evidence="1">Specifically methylates guanosine-37 in various tRNAs.</text>
</comment>
<comment type="catalytic activity">
    <reaction evidence="1">
        <text>guanosine(37) in tRNA + S-adenosyl-L-methionine = N(1)-methylguanosine(37) in tRNA + S-adenosyl-L-homocysteine + H(+)</text>
        <dbReference type="Rhea" id="RHEA:36899"/>
        <dbReference type="Rhea" id="RHEA-COMP:10145"/>
        <dbReference type="Rhea" id="RHEA-COMP:10147"/>
        <dbReference type="ChEBI" id="CHEBI:15378"/>
        <dbReference type="ChEBI" id="CHEBI:57856"/>
        <dbReference type="ChEBI" id="CHEBI:59789"/>
        <dbReference type="ChEBI" id="CHEBI:73542"/>
        <dbReference type="ChEBI" id="CHEBI:74269"/>
        <dbReference type="EC" id="2.1.1.228"/>
    </reaction>
</comment>
<comment type="subunit">
    <text evidence="1">Homodimer.</text>
</comment>
<comment type="subcellular location">
    <subcellularLocation>
        <location evidence="1">Cytoplasm</location>
    </subcellularLocation>
</comment>
<comment type="similarity">
    <text evidence="1">Belongs to the RNA methyltransferase TrmD family.</text>
</comment>